<proteinExistence type="inferred from homology"/>
<organism>
    <name type="scientific">Methanococcus maripaludis (strain C5 / ATCC BAA-1333)</name>
    <dbReference type="NCBI Taxonomy" id="402880"/>
    <lineage>
        <taxon>Archaea</taxon>
        <taxon>Methanobacteriati</taxon>
        <taxon>Methanobacteriota</taxon>
        <taxon>Methanomada group</taxon>
        <taxon>Methanococci</taxon>
        <taxon>Methanococcales</taxon>
        <taxon>Methanococcaceae</taxon>
        <taxon>Methanococcus</taxon>
    </lineage>
</organism>
<dbReference type="EC" id="3.5.4.29" evidence="1"/>
<dbReference type="EMBL" id="CP000609">
    <property type="protein sequence ID" value="ABO35531.1"/>
    <property type="molecule type" value="Genomic_DNA"/>
</dbReference>
<dbReference type="RefSeq" id="WP_011868984.1">
    <property type="nucleotide sequence ID" value="NC_009135.1"/>
</dbReference>
<dbReference type="SMR" id="A4FZ97"/>
<dbReference type="STRING" id="402880.MmarC5_1233"/>
<dbReference type="GeneID" id="4929042"/>
<dbReference type="KEGG" id="mmq:MmarC5_1233"/>
<dbReference type="eggNOG" id="arCOG04202">
    <property type="taxonomic scope" value="Archaea"/>
</dbReference>
<dbReference type="HOGENOM" id="CLU_080076_0_0_2"/>
<dbReference type="OrthoDB" id="25211at2157"/>
<dbReference type="Proteomes" id="UP000000253">
    <property type="component" value="Chromosome"/>
</dbReference>
<dbReference type="GO" id="GO:0005525">
    <property type="term" value="F:GTP binding"/>
    <property type="evidence" value="ECO:0007669"/>
    <property type="project" value="UniProtKB-KW"/>
</dbReference>
<dbReference type="GO" id="GO:0043740">
    <property type="term" value="F:GTP cyclohydrolase IIa activity"/>
    <property type="evidence" value="ECO:0007669"/>
    <property type="project" value="UniProtKB-EC"/>
</dbReference>
<dbReference type="GO" id="GO:0009058">
    <property type="term" value="P:biosynthetic process"/>
    <property type="evidence" value="ECO:0007669"/>
    <property type="project" value="InterPro"/>
</dbReference>
<dbReference type="Gene3D" id="3.30.70.270">
    <property type="match status" value="1"/>
</dbReference>
<dbReference type="Gene3D" id="3.30.70.1230">
    <property type="entry name" value="Nucleotide cyclase"/>
    <property type="match status" value="1"/>
</dbReference>
<dbReference type="HAMAP" id="MF_00608">
    <property type="entry name" value="GTP_cyclohydro_3"/>
    <property type="match status" value="1"/>
</dbReference>
<dbReference type="InterPro" id="IPR007839">
    <property type="entry name" value="GTP_CycHdrlase_3"/>
</dbReference>
<dbReference type="InterPro" id="IPR029787">
    <property type="entry name" value="Nucleotide_cyclase"/>
</dbReference>
<dbReference type="InterPro" id="IPR043128">
    <property type="entry name" value="Rev_trsase/Diguanyl_cyclase"/>
</dbReference>
<dbReference type="NCBIfam" id="NF002587">
    <property type="entry name" value="PRK02240.1"/>
    <property type="match status" value="1"/>
</dbReference>
<dbReference type="PANTHER" id="PTHR42202">
    <property type="entry name" value="GTP CYCLOHYDROLASE III"/>
    <property type="match status" value="1"/>
</dbReference>
<dbReference type="PANTHER" id="PTHR42202:SF1">
    <property type="entry name" value="GTP CYCLOHYDROLASE III"/>
    <property type="match status" value="1"/>
</dbReference>
<dbReference type="Pfam" id="PF05165">
    <property type="entry name" value="GCH_III"/>
    <property type="match status" value="1"/>
</dbReference>
<dbReference type="PIRSF" id="PIRSF009265">
    <property type="entry name" value="GTP_cyclohydro_3"/>
    <property type="match status" value="1"/>
</dbReference>
<comment type="function">
    <text evidence="1">Catalyzes the formation of 2-amino-5-formylamino-6-ribofuranosylamino-4(3H)-pyrimidinone ribonucleotide monophosphate and inorganic phosphate from GTP. Also has an independent pyrophosphate phosphohydrolase activity.</text>
</comment>
<comment type="catalytic activity">
    <reaction evidence="1">
        <text>GTP + 3 H2O = 2-amino-5-formylamino-6-(5-phospho-D-ribosylamino)pyrimidin-4(3H)-one + 2 phosphate + 2 H(+)</text>
        <dbReference type="Rhea" id="RHEA:22468"/>
        <dbReference type="ChEBI" id="CHEBI:15377"/>
        <dbReference type="ChEBI" id="CHEBI:15378"/>
        <dbReference type="ChEBI" id="CHEBI:37565"/>
        <dbReference type="ChEBI" id="CHEBI:43474"/>
        <dbReference type="ChEBI" id="CHEBI:57258"/>
        <dbReference type="EC" id="3.5.4.29"/>
    </reaction>
</comment>
<comment type="similarity">
    <text evidence="1">Belongs to the archaeal-type GTP cyclohydrolase family.</text>
</comment>
<reference key="1">
    <citation type="submission" date="2007-03" db="EMBL/GenBank/DDBJ databases">
        <title>Complete sequence of chromosome of Methanococcus maripaludis C5.</title>
        <authorList>
            <consortium name="US DOE Joint Genome Institute"/>
            <person name="Copeland A."/>
            <person name="Lucas S."/>
            <person name="Lapidus A."/>
            <person name="Barry K."/>
            <person name="Glavina del Rio T."/>
            <person name="Dalin E."/>
            <person name="Tice H."/>
            <person name="Pitluck S."/>
            <person name="Chertkov O."/>
            <person name="Brettin T."/>
            <person name="Bruce D."/>
            <person name="Han C."/>
            <person name="Detter J.C."/>
            <person name="Schmutz J."/>
            <person name="Larimer F."/>
            <person name="Land M."/>
            <person name="Hauser L."/>
            <person name="Kyrpides N."/>
            <person name="Mikhailova N."/>
            <person name="Sieprawska-Lupa M."/>
            <person name="Whitman W.B."/>
            <person name="Richardson P."/>
        </authorList>
    </citation>
    <scope>NUCLEOTIDE SEQUENCE [LARGE SCALE GENOMIC DNA]</scope>
    <source>
        <strain>C5 / ATCC BAA-1333</strain>
    </source>
</reference>
<feature type="chain" id="PRO_1000056691" description="GTP cyclohydrolase III">
    <location>
        <begin position="1"/>
        <end position="266"/>
    </location>
</feature>
<name>GCH3_METM5</name>
<accession>A4FZ97</accession>
<evidence type="ECO:0000255" key="1">
    <source>
        <dbReference type="HAMAP-Rule" id="MF_00608"/>
    </source>
</evidence>
<sequence>MIQITVVQIDNYGPWTVTPNPRRESDLQALQSRLYCDMNLQFGAHRGLAFYTRFDNIIAITNGIDLETHKRIQNSVKNRYPFTVSMAVASAETAYGAQKLATKTIQEYGSAQDDVRKEVLDVANEFVSNGYVQLAHVDINDITGKLTDLETAYDTYLSVQKTKLKLMEELKKYDSLGFFIGGDNFMCPCNGMSEKDFLCMFEDIKESCGIELKAGIGIGKTAEDASDLADIGLEVIREGKTDFQVYTLKQDVEERKDVTYNYMCPI</sequence>
<gene>
    <name evidence="1" type="primary">gch3</name>
    <name type="ordered locus">MmarC5_1233</name>
</gene>
<protein>
    <recommendedName>
        <fullName evidence="1">GTP cyclohydrolase III</fullName>
        <ecNumber evidence="1">3.5.4.29</ecNumber>
    </recommendedName>
</protein>
<keyword id="KW-0342">GTP-binding</keyword>
<keyword id="KW-0378">Hydrolase</keyword>
<keyword id="KW-0547">Nucleotide-binding</keyword>